<feature type="chain" id="PRO_0000254640" description="Protein FAM162B">
    <location>
        <begin position="1"/>
        <end position="157"/>
    </location>
</feature>
<feature type="transmembrane region" description="Helical" evidence="1">
    <location>
        <begin position="104"/>
        <end position="123"/>
    </location>
</feature>
<keyword id="KW-0472">Membrane</keyword>
<keyword id="KW-1185">Reference proteome</keyword>
<keyword id="KW-0812">Transmembrane</keyword>
<keyword id="KW-1133">Transmembrane helix</keyword>
<proteinExistence type="evidence at protein level"/>
<organism>
    <name type="scientific">Mus musculus</name>
    <name type="common">Mouse</name>
    <dbReference type="NCBI Taxonomy" id="10090"/>
    <lineage>
        <taxon>Eukaryota</taxon>
        <taxon>Metazoa</taxon>
        <taxon>Chordata</taxon>
        <taxon>Craniata</taxon>
        <taxon>Vertebrata</taxon>
        <taxon>Euteleostomi</taxon>
        <taxon>Mammalia</taxon>
        <taxon>Eutheria</taxon>
        <taxon>Euarchontoglires</taxon>
        <taxon>Glires</taxon>
        <taxon>Rodentia</taxon>
        <taxon>Myomorpha</taxon>
        <taxon>Muroidea</taxon>
        <taxon>Muridae</taxon>
        <taxon>Murinae</taxon>
        <taxon>Mus</taxon>
        <taxon>Mus</taxon>
    </lineage>
</organism>
<dbReference type="EMBL" id="AK020485">
    <property type="protein sequence ID" value="BAB32118.1"/>
    <property type="molecule type" value="mRNA"/>
</dbReference>
<dbReference type="CCDS" id="CCDS48557.1"/>
<dbReference type="RefSeq" id="NP_084170.1">
    <property type="nucleotide sequence ID" value="NM_029894.1"/>
</dbReference>
<dbReference type="SMR" id="Q9CX19"/>
<dbReference type="FunCoup" id="Q9CX19">
    <property type="interactions" value="2"/>
</dbReference>
<dbReference type="STRING" id="10090.ENSMUSP00000020064"/>
<dbReference type="PhosphoSitePlus" id="Q9CX19"/>
<dbReference type="PaxDb" id="10090-ENSMUSP00000020064"/>
<dbReference type="ProteomicsDB" id="275498"/>
<dbReference type="Antibodypedia" id="51282">
    <property type="antibodies" value="11 antibodies from 6 providers"/>
</dbReference>
<dbReference type="Ensembl" id="ENSMUST00000020064.5">
    <property type="protein sequence ID" value="ENSMUSP00000020064.4"/>
    <property type="gene ID" value="ENSMUSG00000019909.5"/>
</dbReference>
<dbReference type="GeneID" id="77296"/>
<dbReference type="KEGG" id="mmu:77296"/>
<dbReference type="UCSC" id="uc007fat.2">
    <property type="organism name" value="mouse"/>
</dbReference>
<dbReference type="AGR" id="MGI:1924546"/>
<dbReference type="CTD" id="221303"/>
<dbReference type="MGI" id="MGI:1924546">
    <property type="gene designation" value="Fam162b"/>
</dbReference>
<dbReference type="VEuPathDB" id="HostDB:ENSMUSG00000019909"/>
<dbReference type="eggNOG" id="ENOG502SEVW">
    <property type="taxonomic scope" value="Eukaryota"/>
</dbReference>
<dbReference type="GeneTree" id="ENSGT00640000091497"/>
<dbReference type="HOGENOM" id="CLU_122911_1_0_1"/>
<dbReference type="InParanoid" id="Q9CX19"/>
<dbReference type="OMA" id="KGRGEVH"/>
<dbReference type="OrthoDB" id="8193498at2759"/>
<dbReference type="PhylomeDB" id="Q9CX19"/>
<dbReference type="TreeFam" id="TF323771"/>
<dbReference type="BioGRID-ORCS" id="77296">
    <property type="hits" value="3 hits in 77 CRISPR screens"/>
</dbReference>
<dbReference type="PRO" id="PR:Q9CX19"/>
<dbReference type="Proteomes" id="UP000000589">
    <property type="component" value="Chromosome 10"/>
</dbReference>
<dbReference type="RNAct" id="Q9CX19">
    <property type="molecule type" value="protein"/>
</dbReference>
<dbReference type="Bgee" id="ENSMUSG00000019909">
    <property type="expression patterns" value="Expressed in external carotid artery and 50 other cell types or tissues"/>
</dbReference>
<dbReference type="ExpressionAtlas" id="Q9CX19">
    <property type="expression patterns" value="baseline and differential"/>
</dbReference>
<dbReference type="GO" id="GO:0016020">
    <property type="term" value="C:membrane"/>
    <property type="evidence" value="ECO:0007669"/>
    <property type="project" value="UniProtKB-SubCell"/>
</dbReference>
<dbReference type="InterPro" id="IPR009432">
    <property type="entry name" value="DUF1075"/>
</dbReference>
<dbReference type="PANTHER" id="PTHR13674">
    <property type="entry name" value="GROWTH AND TRANSFORMATION-DEPENDENT PROTEIN"/>
    <property type="match status" value="1"/>
</dbReference>
<dbReference type="PANTHER" id="PTHR13674:SF3">
    <property type="entry name" value="PROTEIN FAM162B"/>
    <property type="match status" value="1"/>
</dbReference>
<dbReference type="Pfam" id="PF06388">
    <property type="entry name" value="DUF1075"/>
    <property type="match status" value="1"/>
</dbReference>
<evidence type="ECO:0000255" key="1"/>
<evidence type="ECO:0000305" key="2"/>
<accession>Q9CX19</accession>
<sequence length="157" mass="17686">MLWVSRSVLRLGLGFTTHRAPQIISRWPRWGPRVACHPCSSSGQNPSGFEPPEKVHRIPAQYKPSKFDKKILLWTGRFKSIEDIPPLVPPEMIAVSRNKARVKACYIMIGLTIVACFAVIVSAKRAVERHESLTSWNLAKKAKWREEAALAAQSKSK</sequence>
<name>F162B_MOUSE</name>
<reference key="1">
    <citation type="journal article" date="2005" name="Science">
        <title>The transcriptional landscape of the mammalian genome.</title>
        <authorList>
            <person name="Carninci P."/>
            <person name="Kasukawa T."/>
            <person name="Katayama S."/>
            <person name="Gough J."/>
            <person name="Frith M.C."/>
            <person name="Maeda N."/>
            <person name="Oyama R."/>
            <person name="Ravasi T."/>
            <person name="Lenhard B."/>
            <person name="Wells C."/>
            <person name="Kodzius R."/>
            <person name="Shimokawa K."/>
            <person name="Bajic V.B."/>
            <person name="Brenner S.E."/>
            <person name="Batalov S."/>
            <person name="Forrest A.R."/>
            <person name="Zavolan M."/>
            <person name="Davis M.J."/>
            <person name="Wilming L.G."/>
            <person name="Aidinis V."/>
            <person name="Allen J.E."/>
            <person name="Ambesi-Impiombato A."/>
            <person name="Apweiler R."/>
            <person name="Aturaliya R.N."/>
            <person name="Bailey T.L."/>
            <person name="Bansal M."/>
            <person name="Baxter L."/>
            <person name="Beisel K.W."/>
            <person name="Bersano T."/>
            <person name="Bono H."/>
            <person name="Chalk A.M."/>
            <person name="Chiu K.P."/>
            <person name="Choudhary V."/>
            <person name="Christoffels A."/>
            <person name="Clutterbuck D.R."/>
            <person name="Crowe M.L."/>
            <person name="Dalla E."/>
            <person name="Dalrymple B.P."/>
            <person name="de Bono B."/>
            <person name="Della Gatta G."/>
            <person name="di Bernardo D."/>
            <person name="Down T."/>
            <person name="Engstrom P."/>
            <person name="Fagiolini M."/>
            <person name="Faulkner G."/>
            <person name="Fletcher C.F."/>
            <person name="Fukushima T."/>
            <person name="Furuno M."/>
            <person name="Futaki S."/>
            <person name="Gariboldi M."/>
            <person name="Georgii-Hemming P."/>
            <person name="Gingeras T.R."/>
            <person name="Gojobori T."/>
            <person name="Green R.E."/>
            <person name="Gustincich S."/>
            <person name="Harbers M."/>
            <person name="Hayashi Y."/>
            <person name="Hensch T.K."/>
            <person name="Hirokawa N."/>
            <person name="Hill D."/>
            <person name="Huminiecki L."/>
            <person name="Iacono M."/>
            <person name="Ikeo K."/>
            <person name="Iwama A."/>
            <person name="Ishikawa T."/>
            <person name="Jakt M."/>
            <person name="Kanapin A."/>
            <person name="Katoh M."/>
            <person name="Kawasawa Y."/>
            <person name="Kelso J."/>
            <person name="Kitamura H."/>
            <person name="Kitano H."/>
            <person name="Kollias G."/>
            <person name="Krishnan S.P."/>
            <person name="Kruger A."/>
            <person name="Kummerfeld S.K."/>
            <person name="Kurochkin I.V."/>
            <person name="Lareau L.F."/>
            <person name="Lazarevic D."/>
            <person name="Lipovich L."/>
            <person name="Liu J."/>
            <person name="Liuni S."/>
            <person name="McWilliam S."/>
            <person name="Madan Babu M."/>
            <person name="Madera M."/>
            <person name="Marchionni L."/>
            <person name="Matsuda H."/>
            <person name="Matsuzawa S."/>
            <person name="Miki H."/>
            <person name="Mignone F."/>
            <person name="Miyake S."/>
            <person name="Morris K."/>
            <person name="Mottagui-Tabar S."/>
            <person name="Mulder N."/>
            <person name="Nakano N."/>
            <person name="Nakauchi H."/>
            <person name="Ng P."/>
            <person name="Nilsson R."/>
            <person name="Nishiguchi S."/>
            <person name="Nishikawa S."/>
            <person name="Nori F."/>
            <person name="Ohara O."/>
            <person name="Okazaki Y."/>
            <person name="Orlando V."/>
            <person name="Pang K.C."/>
            <person name="Pavan W.J."/>
            <person name="Pavesi G."/>
            <person name="Pesole G."/>
            <person name="Petrovsky N."/>
            <person name="Piazza S."/>
            <person name="Reed J."/>
            <person name="Reid J.F."/>
            <person name="Ring B.Z."/>
            <person name="Ringwald M."/>
            <person name="Rost B."/>
            <person name="Ruan Y."/>
            <person name="Salzberg S.L."/>
            <person name="Sandelin A."/>
            <person name="Schneider C."/>
            <person name="Schoenbach C."/>
            <person name="Sekiguchi K."/>
            <person name="Semple C.A."/>
            <person name="Seno S."/>
            <person name="Sessa L."/>
            <person name="Sheng Y."/>
            <person name="Shibata Y."/>
            <person name="Shimada H."/>
            <person name="Shimada K."/>
            <person name="Silva D."/>
            <person name="Sinclair B."/>
            <person name="Sperling S."/>
            <person name="Stupka E."/>
            <person name="Sugiura K."/>
            <person name="Sultana R."/>
            <person name="Takenaka Y."/>
            <person name="Taki K."/>
            <person name="Tammoja K."/>
            <person name="Tan S.L."/>
            <person name="Tang S."/>
            <person name="Taylor M.S."/>
            <person name="Tegner J."/>
            <person name="Teichmann S.A."/>
            <person name="Ueda H.R."/>
            <person name="van Nimwegen E."/>
            <person name="Verardo R."/>
            <person name="Wei C.L."/>
            <person name="Yagi K."/>
            <person name="Yamanishi H."/>
            <person name="Zabarovsky E."/>
            <person name="Zhu S."/>
            <person name="Zimmer A."/>
            <person name="Hide W."/>
            <person name="Bult C."/>
            <person name="Grimmond S.M."/>
            <person name="Teasdale R.D."/>
            <person name="Liu E.T."/>
            <person name="Brusic V."/>
            <person name="Quackenbush J."/>
            <person name="Wahlestedt C."/>
            <person name="Mattick J.S."/>
            <person name="Hume D.A."/>
            <person name="Kai C."/>
            <person name="Sasaki D."/>
            <person name="Tomaru Y."/>
            <person name="Fukuda S."/>
            <person name="Kanamori-Katayama M."/>
            <person name="Suzuki M."/>
            <person name="Aoki J."/>
            <person name="Arakawa T."/>
            <person name="Iida J."/>
            <person name="Imamura K."/>
            <person name="Itoh M."/>
            <person name="Kato T."/>
            <person name="Kawaji H."/>
            <person name="Kawagashira N."/>
            <person name="Kawashima T."/>
            <person name="Kojima M."/>
            <person name="Kondo S."/>
            <person name="Konno H."/>
            <person name="Nakano K."/>
            <person name="Ninomiya N."/>
            <person name="Nishio T."/>
            <person name="Okada M."/>
            <person name="Plessy C."/>
            <person name="Shibata K."/>
            <person name="Shiraki T."/>
            <person name="Suzuki S."/>
            <person name="Tagami M."/>
            <person name="Waki K."/>
            <person name="Watahiki A."/>
            <person name="Okamura-Oho Y."/>
            <person name="Suzuki H."/>
            <person name="Kawai J."/>
            <person name="Hayashizaki Y."/>
        </authorList>
    </citation>
    <scope>NUCLEOTIDE SEQUENCE [LARGE SCALE MRNA]</scope>
    <source>
        <strain>C57BL/6J</strain>
    </source>
</reference>
<reference key="2">
    <citation type="journal article" date="2010" name="Cell">
        <title>A tissue-specific atlas of mouse protein phosphorylation and expression.</title>
        <authorList>
            <person name="Huttlin E.L."/>
            <person name="Jedrychowski M.P."/>
            <person name="Elias J.E."/>
            <person name="Goswami T."/>
            <person name="Rad R."/>
            <person name="Beausoleil S.A."/>
            <person name="Villen J."/>
            <person name="Haas W."/>
            <person name="Sowa M.E."/>
            <person name="Gygi S.P."/>
        </authorList>
    </citation>
    <scope>IDENTIFICATION BY MASS SPECTROMETRY [LARGE SCALE ANALYSIS]</scope>
    <source>
        <tissue>Lung</tissue>
    </source>
</reference>
<gene>
    <name type="primary">Fam162b</name>
</gene>
<protein>
    <recommendedName>
        <fullName>Protein FAM162B</fullName>
    </recommendedName>
</protein>
<comment type="subcellular location">
    <subcellularLocation>
        <location evidence="2">Membrane</location>
        <topology evidence="2">Single-pass membrane protein</topology>
    </subcellularLocation>
</comment>
<comment type="similarity">
    <text evidence="2">Belongs to the UPF0389 family.</text>
</comment>